<reference key="1">
    <citation type="journal article" date="2008" name="J. Bacteriol.">
        <title>Genome sequence of Staphylococcus aureus strain Newman and comparative analysis of staphylococcal genomes: polymorphism and evolution of two major pathogenicity islands.</title>
        <authorList>
            <person name="Baba T."/>
            <person name="Bae T."/>
            <person name="Schneewind O."/>
            <person name="Takeuchi F."/>
            <person name="Hiramatsu K."/>
        </authorList>
    </citation>
    <scope>NUCLEOTIDE SEQUENCE [LARGE SCALE GENOMIC DNA]</scope>
    <source>
        <strain>Newman</strain>
    </source>
</reference>
<reference key="2">
    <citation type="journal article" date="2006" name="PLoS Pathog.">
        <title>Staphylococcus aureus redirects central metabolism to increase iron availability.</title>
        <authorList>
            <person name="Friedman D.B."/>
            <person name="Stauff D.L."/>
            <person name="Pishchany G."/>
            <person name="Whitwell C.W."/>
            <person name="Torres V.J."/>
            <person name="Skaar E.P."/>
        </authorList>
    </citation>
    <scope>FUNCTION</scope>
    <scope>INDUCTION</scope>
</reference>
<name>HRTA_STAAE</name>
<organism>
    <name type="scientific">Staphylococcus aureus (strain Newman)</name>
    <dbReference type="NCBI Taxonomy" id="426430"/>
    <lineage>
        <taxon>Bacteria</taxon>
        <taxon>Bacillati</taxon>
        <taxon>Bacillota</taxon>
        <taxon>Bacilli</taxon>
        <taxon>Bacillales</taxon>
        <taxon>Staphylococcaceae</taxon>
        <taxon>Staphylococcus</taxon>
    </lineage>
</organism>
<comment type="function">
    <text evidence="4">Part of the ABC transporter complex hrt involved in hemin import. Responsible for energy coupling to the transport system (Probable).</text>
</comment>
<comment type="subunit">
    <text evidence="3">The complex is composed of two ATP-binding proteins (HrtA), two transmembrane proteins (HrtB) and a solute-binding protein.</text>
</comment>
<comment type="subcellular location">
    <subcellularLocation>
        <location evidence="3">Cell membrane</location>
        <topology evidence="3">Peripheral membrane protein</topology>
    </subcellularLocation>
</comment>
<comment type="induction">
    <text evidence="2">Highly induced by hemin.</text>
</comment>
<comment type="similarity">
    <text evidence="3">Belongs to the ABC transporter superfamily. HrtA family.</text>
</comment>
<sequence length="221" mass="24626">MALVVEDIVKNFGEGLSETKVLKGINFEVEQGEFVILNGASGSGKTTLLTILGGLLSQTSGTVLYNDAPLFDKQHRPSDLRLEDIGFIFQSSHLVPYLKVIEQLTLVGQEAGMTKQQSSTRAIQLLKNIGLEDRLNVYPHQLSGGEKQRVAIMRAFMNNPKIILADEPTASLDADRATKVVEMIRQQIKEQQMIGIMITHDRRLFEYADRVIELEDGKITD</sequence>
<accession>A6QJK1</accession>
<feature type="chain" id="PRO_0000317035" description="Putative hemin import ATP-binding protein HrtA">
    <location>
        <begin position="1"/>
        <end position="221"/>
    </location>
</feature>
<feature type="domain" description="ABC transporter" evidence="1">
    <location>
        <begin position="3"/>
        <end position="221"/>
    </location>
</feature>
<feature type="binding site" evidence="1">
    <location>
        <begin position="39"/>
        <end position="46"/>
    </location>
    <ligand>
        <name>ATP</name>
        <dbReference type="ChEBI" id="CHEBI:30616"/>
    </ligand>
</feature>
<protein>
    <recommendedName>
        <fullName>Putative hemin import ATP-binding protein HrtA</fullName>
        <ecNumber>7.6.2.-</ecNumber>
    </recommendedName>
</protein>
<gene>
    <name type="primary">hrtA</name>
    <name type="ordered locus">NWMN_2261</name>
</gene>
<keyword id="KW-0067">ATP-binding</keyword>
<keyword id="KW-1003">Cell membrane</keyword>
<keyword id="KW-0472">Membrane</keyword>
<keyword id="KW-0547">Nucleotide-binding</keyword>
<keyword id="KW-1278">Translocase</keyword>
<keyword id="KW-0813">Transport</keyword>
<dbReference type="EC" id="7.6.2.-"/>
<dbReference type="EMBL" id="AP009351">
    <property type="protein sequence ID" value="BAF68533.1"/>
    <property type="molecule type" value="Genomic_DNA"/>
</dbReference>
<dbReference type="RefSeq" id="WP_001229911.1">
    <property type="nucleotide sequence ID" value="NZ_JBBIAE010000004.1"/>
</dbReference>
<dbReference type="SMR" id="A6QJK1"/>
<dbReference type="KEGG" id="sae:NWMN_2261"/>
<dbReference type="HOGENOM" id="CLU_000604_1_22_9"/>
<dbReference type="Proteomes" id="UP000006386">
    <property type="component" value="Chromosome"/>
</dbReference>
<dbReference type="GO" id="GO:0005886">
    <property type="term" value="C:plasma membrane"/>
    <property type="evidence" value="ECO:0007669"/>
    <property type="project" value="UniProtKB-SubCell"/>
</dbReference>
<dbReference type="GO" id="GO:0005524">
    <property type="term" value="F:ATP binding"/>
    <property type="evidence" value="ECO:0007669"/>
    <property type="project" value="UniProtKB-KW"/>
</dbReference>
<dbReference type="GO" id="GO:0016887">
    <property type="term" value="F:ATP hydrolysis activity"/>
    <property type="evidence" value="ECO:0007669"/>
    <property type="project" value="InterPro"/>
</dbReference>
<dbReference type="GO" id="GO:0022857">
    <property type="term" value="F:transmembrane transporter activity"/>
    <property type="evidence" value="ECO:0007669"/>
    <property type="project" value="TreeGrafter"/>
</dbReference>
<dbReference type="CDD" id="cd03255">
    <property type="entry name" value="ABC_MJ0796_LolCDE_FtsE"/>
    <property type="match status" value="1"/>
</dbReference>
<dbReference type="FunFam" id="3.40.50.300:FF:000032">
    <property type="entry name" value="Export ABC transporter ATP-binding protein"/>
    <property type="match status" value="1"/>
</dbReference>
<dbReference type="Gene3D" id="3.40.50.300">
    <property type="entry name" value="P-loop containing nucleotide triphosphate hydrolases"/>
    <property type="match status" value="1"/>
</dbReference>
<dbReference type="InterPro" id="IPR003593">
    <property type="entry name" value="AAA+_ATPase"/>
</dbReference>
<dbReference type="InterPro" id="IPR003439">
    <property type="entry name" value="ABC_transporter-like_ATP-bd"/>
</dbReference>
<dbReference type="InterPro" id="IPR015854">
    <property type="entry name" value="ABC_transpr_LolD-like"/>
</dbReference>
<dbReference type="InterPro" id="IPR017911">
    <property type="entry name" value="MacB-like_ATP-bd"/>
</dbReference>
<dbReference type="InterPro" id="IPR027417">
    <property type="entry name" value="P-loop_NTPase"/>
</dbReference>
<dbReference type="PANTHER" id="PTHR24220:SF666">
    <property type="entry name" value="HEMIN IMPORT ATP-BINDING PROTEIN HRTA-RELATED"/>
    <property type="match status" value="1"/>
</dbReference>
<dbReference type="PANTHER" id="PTHR24220">
    <property type="entry name" value="IMPORT ATP-BINDING PROTEIN"/>
    <property type="match status" value="1"/>
</dbReference>
<dbReference type="Pfam" id="PF00005">
    <property type="entry name" value="ABC_tran"/>
    <property type="match status" value="1"/>
</dbReference>
<dbReference type="SMART" id="SM00382">
    <property type="entry name" value="AAA"/>
    <property type="match status" value="1"/>
</dbReference>
<dbReference type="SUPFAM" id="SSF52540">
    <property type="entry name" value="P-loop containing nucleoside triphosphate hydrolases"/>
    <property type="match status" value="1"/>
</dbReference>
<dbReference type="PROSITE" id="PS50893">
    <property type="entry name" value="ABC_TRANSPORTER_2"/>
    <property type="match status" value="1"/>
</dbReference>
<proteinExistence type="evidence at transcript level"/>
<evidence type="ECO:0000255" key="1">
    <source>
        <dbReference type="PROSITE-ProRule" id="PRU00434"/>
    </source>
</evidence>
<evidence type="ECO:0000269" key="2">
    <source>
    </source>
</evidence>
<evidence type="ECO:0000305" key="3"/>
<evidence type="ECO:0000305" key="4">
    <source>
    </source>
</evidence>